<dbReference type="EMBL" id="Z26877">
    <property type="status" value="NOT_ANNOTATED_CDS"/>
    <property type="molecule type" value="Genomic_DNA"/>
</dbReference>
<dbReference type="EMBL" id="Z26878">
    <property type="status" value="NOT_ANNOTATED_CDS"/>
    <property type="molecule type" value="Genomic_DNA"/>
</dbReference>
<dbReference type="EMBL" id="Z28165">
    <property type="status" value="NOT_ANNOTATED_CDS"/>
    <property type="molecule type" value="Genomic_DNA"/>
</dbReference>
<dbReference type="EMBL" id="Z28166">
    <property type="status" value="NOT_ANNOTATED_CDS"/>
    <property type="molecule type" value="Genomic_DNA"/>
</dbReference>
<dbReference type="STRING" id="4932.YKL165C-A"/>
<dbReference type="PaxDb" id="4932-YKL165C-A"/>
<dbReference type="EnsemblFungi" id="YKL165C-A_mRNA">
    <property type="protein sequence ID" value="YKL165C-A"/>
    <property type="gene ID" value="YKL165C-A"/>
</dbReference>
<dbReference type="AGR" id="SGD:S000007617"/>
<dbReference type="SGD" id="S000007617">
    <property type="gene designation" value="YKL165C-A"/>
</dbReference>
<dbReference type="HOGENOM" id="CLU_2639477_0_0_1"/>
<dbReference type="GO" id="GO:0016020">
    <property type="term" value="C:membrane"/>
    <property type="evidence" value="ECO:0007669"/>
    <property type="project" value="UniProtKB-SubCell"/>
</dbReference>
<keyword id="KW-0472">Membrane</keyword>
<keyword id="KW-0812">Transmembrane</keyword>
<keyword id="KW-1133">Transmembrane helix</keyword>
<gene>
    <name type="ordered locus">YKL165C-A</name>
</gene>
<comment type="subcellular location">
    <subcellularLocation>
        <location evidence="2">Membrane</location>
        <topology evidence="2">Single-pass membrane protein</topology>
    </subcellularLocation>
</comment>
<comment type="caution">
    <text evidence="3">Product of a dubious gene prediction unlikely to encode a functional protein. Because of that it is not part of the S.cerevisiae S288c complete/reference proteome set.</text>
</comment>
<organism>
    <name type="scientific">Saccharomyces cerevisiae (strain ATCC 204508 / S288c)</name>
    <name type="common">Baker's yeast</name>
    <dbReference type="NCBI Taxonomy" id="559292"/>
    <lineage>
        <taxon>Eukaryota</taxon>
        <taxon>Fungi</taxon>
        <taxon>Dikarya</taxon>
        <taxon>Ascomycota</taxon>
        <taxon>Saccharomycotina</taxon>
        <taxon>Saccharomycetes</taxon>
        <taxon>Saccharomycetales</taxon>
        <taxon>Saccharomycetaceae</taxon>
        <taxon>Saccharomyces</taxon>
    </lineage>
</organism>
<reference key="1">
    <citation type="journal article" date="1994" name="Yeast">
        <title>Sequencing and analysis of a 20.5 kb DNA segment located on the left arm of yeast chromosome XI.</title>
        <authorList>
            <person name="Vandenbol M."/>
            <person name="Bolle P.-A."/>
            <person name="Dion C."/>
            <person name="Portetelle D."/>
            <person name="Hilger F."/>
        </authorList>
    </citation>
    <scope>NUCLEOTIDE SEQUENCE [GENOMIC DNA]</scope>
    <source>
        <strain>ATCC 204508 / S288c</strain>
    </source>
</reference>
<reference key="2">
    <citation type="journal article" date="1994" name="Yeast">
        <title>DNA sequencing of a 36.2 kb fragment located between the FAS1 and LAP loci of chromosome XI of Saccharomyces cerevisiae.</title>
        <authorList>
            <person name="Vandenbol M."/>
            <person name="Bolle P.-A."/>
            <person name="Dion C."/>
            <person name="Portetelle D."/>
            <person name="Hilger F."/>
        </authorList>
    </citation>
    <scope>NUCLEOTIDE SEQUENCE [GENOMIC DNA]</scope>
    <source>
        <strain>ATCC 204508 / S288c</strain>
    </source>
</reference>
<reference key="3">
    <citation type="journal article" date="1994" name="Nature">
        <title>Complete DNA sequence of yeast chromosome XI.</title>
        <authorList>
            <person name="Dujon B."/>
            <person name="Alexandraki D."/>
            <person name="Andre B."/>
            <person name="Ansorge W."/>
            <person name="Baladron V."/>
            <person name="Ballesta J.P.G."/>
            <person name="Banrevi A."/>
            <person name="Bolle P.-A."/>
            <person name="Bolotin-Fukuhara M."/>
            <person name="Bossier P."/>
            <person name="Bou G."/>
            <person name="Boyer J."/>
            <person name="Buitrago M.J."/>
            <person name="Cheret G."/>
            <person name="Colleaux L."/>
            <person name="Daignan-Fornier B."/>
            <person name="del Rey F."/>
            <person name="Dion C."/>
            <person name="Domdey H."/>
            <person name="Duesterhoeft A."/>
            <person name="Duesterhus S."/>
            <person name="Entian K.-D."/>
            <person name="Erfle H."/>
            <person name="Esteban P.F."/>
            <person name="Feldmann H."/>
            <person name="Fernandes L."/>
            <person name="Fobo G.M."/>
            <person name="Fritz C."/>
            <person name="Fukuhara H."/>
            <person name="Gabel C."/>
            <person name="Gaillon L."/>
            <person name="Garcia-Cantalejo J.M."/>
            <person name="Garcia-Ramirez J.J."/>
            <person name="Gent M.E."/>
            <person name="Ghazvini M."/>
            <person name="Goffeau A."/>
            <person name="Gonzalez A."/>
            <person name="Grothues D."/>
            <person name="Guerreiro P."/>
            <person name="Hegemann J.H."/>
            <person name="Hewitt N."/>
            <person name="Hilger F."/>
            <person name="Hollenberg C.P."/>
            <person name="Horaitis O."/>
            <person name="Indge K.J."/>
            <person name="Jacquier A."/>
            <person name="James C.M."/>
            <person name="Jauniaux J.-C."/>
            <person name="Jimenez A."/>
            <person name="Keuchel H."/>
            <person name="Kirchrath L."/>
            <person name="Kleine K."/>
            <person name="Koetter P."/>
            <person name="Legrain P."/>
            <person name="Liebl S."/>
            <person name="Louis E.J."/>
            <person name="Maia e Silva A."/>
            <person name="Marck C."/>
            <person name="Monnier A.-L."/>
            <person name="Moestl D."/>
            <person name="Mueller S."/>
            <person name="Obermaier B."/>
            <person name="Oliver S.G."/>
            <person name="Pallier C."/>
            <person name="Pascolo S."/>
            <person name="Pfeiffer F."/>
            <person name="Philippsen P."/>
            <person name="Planta R.J."/>
            <person name="Pohl F.M."/>
            <person name="Pohl T.M."/>
            <person name="Poehlmann R."/>
            <person name="Portetelle D."/>
            <person name="Purnelle B."/>
            <person name="Puzos V."/>
            <person name="Ramezani Rad M."/>
            <person name="Rasmussen S.W."/>
            <person name="Remacha M.A."/>
            <person name="Revuelta J.L."/>
            <person name="Richard G.-F."/>
            <person name="Rieger M."/>
            <person name="Rodrigues-Pousada C."/>
            <person name="Rose M."/>
            <person name="Rupp T."/>
            <person name="Santos M.A."/>
            <person name="Schwager C."/>
            <person name="Sensen C."/>
            <person name="Skala J."/>
            <person name="Soares H."/>
            <person name="Sor F."/>
            <person name="Stegemann J."/>
            <person name="Tettelin H."/>
            <person name="Thierry A."/>
            <person name="Tzermia M."/>
            <person name="Urrestarazu L.A."/>
            <person name="van Dyck L."/>
            <person name="van Vliet-Reedijk J.C."/>
            <person name="Valens M."/>
            <person name="Vandenbol M."/>
            <person name="Vilela C."/>
            <person name="Vissers S."/>
            <person name="von Wettstein D."/>
            <person name="Voss H."/>
            <person name="Wiemann S."/>
            <person name="Xu G."/>
            <person name="Zimmermann J."/>
            <person name="Haasemann M."/>
            <person name="Becker I."/>
            <person name="Mewes H.-W."/>
        </authorList>
    </citation>
    <scope>NUCLEOTIDE SEQUENCE [LARGE SCALE GENOMIC DNA]</scope>
    <source>
        <strain>ATCC 204508 / S288c</strain>
    </source>
</reference>
<reference key="4">
    <citation type="journal article" date="2014" name="G3 (Bethesda)">
        <title>The reference genome sequence of Saccharomyces cerevisiae: Then and now.</title>
        <authorList>
            <person name="Engel S.R."/>
            <person name="Dietrich F.S."/>
            <person name="Fisk D.G."/>
            <person name="Binkley G."/>
            <person name="Balakrishnan R."/>
            <person name="Costanzo M.C."/>
            <person name="Dwight S.S."/>
            <person name="Hitz B.C."/>
            <person name="Karra K."/>
            <person name="Nash R.S."/>
            <person name="Weng S."/>
            <person name="Wong E.D."/>
            <person name="Lloyd P."/>
            <person name="Skrzypek M.S."/>
            <person name="Miyasato S.R."/>
            <person name="Simison M."/>
            <person name="Cherry J.M."/>
        </authorList>
    </citation>
    <scope>GENOME REANNOTATION</scope>
    <source>
        <strain>ATCC 204508 / S288c</strain>
    </source>
</reference>
<reference key="5">
    <citation type="journal article" date="2000" name="FEBS Lett.">
        <title>Genomic exploration of the hemiascomycetous yeasts: 4. The genome of Saccharomyces cerevisiae revisited.</title>
        <authorList>
            <person name="Blandin G."/>
            <person name="Durrens P."/>
            <person name="Tekaia F."/>
            <person name="Aigle M."/>
            <person name="Bolotin-Fukuhara M."/>
            <person name="Bon E."/>
            <person name="Casaregola S."/>
            <person name="de Montigny J."/>
            <person name="Gaillardin C."/>
            <person name="Lepingle A."/>
            <person name="Llorente B."/>
            <person name="Malpertuy A."/>
            <person name="Neuveglise C."/>
            <person name="Ozier-Kalogeropoulos O."/>
            <person name="Perrin A."/>
            <person name="Potier S."/>
            <person name="Souciet J.-L."/>
            <person name="Talla E."/>
            <person name="Toffano-Nioche C."/>
            <person name="Wesolowski-Louvel M."/>
            <person name="Marck C."/>
            <person name="Dujon B."/>
        </authorList>
    </citation>
    <scope>GENOME REANNOTATION</scope>
</reference>
<name>YK165_YEAST</name>
<proteinExistence type="uncertain"/>
<protein>
    <recommendedName>
        <fullName>Putative uncharacterized YKL165C-A</fullName>
    </recommendedName>
</protein>
<sequence length="77" mass="9186">MQFPVFFFRCFSYGISSMPLKNKVVFNENMERKDTFYQLILKVLSALLLLSVRNSSGHTRHFVQSSEKIYRRSLFKQ</sequence>
<feature type="chain" id="PRO_0000309043" description="Putative uncharacterized YKL165C-A">
    <location>
        <begin position="1"/>
        <end position="77"/>
    </location>
</feature>
<feature type="transmembrane region" description="Helical" evidence="1">
    <location>
        <begin position="36"/>
        <end position="52"/>
    </location>
</feature>
<accession>P0C5P5</accession>
<evidence type="ECO:0000255" key="1"/>
<evidence type="ECO:0000305" key="2"/>
<evidence type="ECO:0000305" key="3">
    <source>
    </source>
</evidence>